<reference key="1">
    <citation type="journal article" date="2007" name="PLoS Genet.">
        <title>Patterns and implications of gene gain and loss in the evolution of Prochlorococcus.</title>
        <authorList>
            <person name="Kettler G.C."/>
            <person name="Martiny A.C."/>
            <person name="Huang K."/>
            <person name="Zucker J."/>
            <person name="Coleman M.L."/>
            <person name="Rodrigue S."/>
            <person name="Chen F."/>
            <person name="Lapidus A."/>
            <person name="Ferriera S."/>
            <person name="Johnson J."/>
            <person name="Steglich C."/>
            <person name="Church G.M."/>
            <person name="Richardson P."/>
            <person name="Chisholm S.W."/>
        </authorList>
    </citation>
    <scope>NUCLEOTIDE SEQUENCE [LARGE SCALE GENOMIC DNA]</scope>
    <source>
        <strain>NATL2A</strain>
    </source>
</reference>
<dbReference type="EMBL" id="CP000095">
    <property type="protein sequence ID" value="AAZ58566.1"/>
    <property type="molecule type" value="Genomic_DNA"/>
</dbReference>
<dbReference type="RefSeq" id="WP_011295420.1">
    <property type="nucleotide sequence ID" value="NC_007335.2"/>
</dbReference>
<dbReference type="SMR" id="Q46IW2"/>
<dbReference type="STRING" id="59920.PMN2A_1076"/>
<dbReference type="KEGG" id="pmn:PMN2A_1076"/>
<dbReference type="HOGENOM" id="CLU_072226_1_1_3"/>
<dbReference type="OrthoDB" id="9807653at2"/>
<dbReference type="PhylomeDB" id="Q46IW2"/>
<dbReference type="Proteomes" id="UP000002535">
    <property type="component" value="Chromosome"/>
</dbReference>
<dbReference type="GO" id="GO:0015935">
    <property type="term" value="C:small ribosomal subunit"/>
    <property type="evidence" value="ECO:0007669"/>
    <property type="project" value="InterPro"/>
</dbReference>
<dbReference type="GO" id="GO:0019843">
    <property type="term" value="F:rRNA binding"/>
    <property type="evidence" value="ECO:0007669"/>
    <property type="project" value="UniProtKB-UniRule"/>
</dbReference>
<dbReference type="GO" id="GO:0003735">
    <property type="term" value="F:structural constituent of ribosome"/>
    <property type="evidence" value="ECO:0007669"/>
    <property type="project" value="InterPro"/>
</dbReference>
<dbReference type="GO" id="GO:0000049">
    <property type="term" value="F:tRNA binding"/>
    <property type="evidence" value="ECO:0007669"/>
    <property type="project" value="UniProtKB-UniRule"/>
</dbReference>
<dbReference type="GO" id="GO:0006412">
    <property type="term" value="P:translation"/>
    <property type="evidence" value="ECO:0007669"/>
    <property type="project" value="UniProtKB-UniRule"/>
</dbReference>
<dbReference type="CDD" id="cd14871">
    <property type="entry name" value="uS7_Chloroplast"/>
    <property type="match status" value="1"/>
</dbReference>
<dbReference type="FunFam" id="1.10.455.10:FF:000001">
    <property type="entry name" value="30S ribosomal protein S7"/>
    <property type="match status" value="1"/>
</dbReference>
<dbReference type="Gene3D" id="1.10.455.10">
    <property type="entry name" value="Ribosomal protein S7 domain"/>
    <property type="match status" value="1"/>
</dbReference>
<dbReference type="HAMAP" id="MF_00480_B">
    <property type="entry name" value="Ribosomal_uS7_B"/>
    <property type="match status" value="1"/>
</dbReference>
<dbReference type="InterPro" id="IPR000235">
    <property type="entry name" value="Ribosomal_uS7"/>
</dbReference>
<dbReference type="InterPro" id="IPR005717">
    <property type="entry name" value="Ribosomal_uS7_bac/org-type"/>
</dbReference>
<dbReference type="InterPro" id="IPR020606">
    <property type="entry name" value="Ribosomal_uS7_CS"/>
</dbReference>
<dbReference type="InterPro" id="IPR023798">
    <property type="entry name" value="Ribosomal_uS7_dom"/>
</dbReference>
<dbReference type="InterPro" id="IPR036823">
    <property type="entry name" value="Ribosomal_uS7_dom_sf"/>
</dbReference>
<dbReference type="NCBIfam" id="TIGR01029">
    <property type="entry name" value="rpsG_bact"/>
    <property type="match status" value="1"/>
</dbReference>
<dbReference type="PANTHER" id="PTHR11205">
    <property type="entry name" value="RIBOSOMAL PROTEIN S7"/>
    <property type="match status" value="1"/>
</dbReference>
<dbReference type="Pfam" id="PF00177">
    <property type="entry name" value="Ribosomal_S7"/>
    <property type="match status" value="1"/>
</dbReference>
<dbReference type="PIRSF" id="PIRSF002122">
    <property type="entry name" value="RPS7p_RPS7a_RPS5e_RPS7o"/>
    <property type="match status" value="1"/>
</dbReference>
<dbReference type="SUPFAM" id="SSF47973">
    <property type="entry name" value="Ribosomal protein S7"/>
    <property type="match status" value="1"/>
</dbReference>
<dbReference type="PROSITE" id="PS00052">
    <property type="entry name" value="RIBOSOMAL_S7"/>
    <property type="match status" value="1"/>
</dbReference>
<keyword id="KW-1185">Reference proteome</keyword>
<keyword id="KW-0687">Ribonucleoprotein</keyword>
<keyword id="KW-0689">Ribosomal protein</keyword>
<keyword id="KW-0694">RNA-binding</keyword>
<keyword id="KW-0699">rRNA-binding</keyword>
<keyword id="KW-0820">tRNA-binding</keyword>
<protein>
    <recommendedName>
        <fullName evidence="1">Small ribosomal subunit protein uS7</fullName>
    </recommendedName>
    <alternativeName>
        <fullName evidence="2">30S ribosomal protein S7</fullName>
    </alternativeName>
</protein>
<feature type="chain" id="PRO_0000226515" description="Small ribosomal subunit protein uS7">
    <location>
        <begin position="1"/>
        <end position="156"/>
    </location>
</feature>
<sequence>MSRRNAAEKRPVLPDPQFNNRLASMMVHRLMKHGKKSTAQKILSDAFGLINERTGSDPIELFETAVKNVTPLVEVRARRVGGATYQVPMEVRQERGIAMALRWLVNFSRSRNGRSMAQKLAGELMDAANEAGNAVRKREETHKMAEANKAFAHYRY</sequence>
<gene>
    <name evidence="1" type="primary">rpsG</name>
    <name evidence="1" type="synonym">rps7</name>
    <name type="ordered locus">PMN2A_1076</name>
</gene>
<proteinExistence type="inferred from homology"/>
<name>RS7_PROMT</name>
<organism>
    <name type="scientific">Prochlorococcus marinus (strain NATL2A)</name>
    <dbReference type="NCBI Taxonomy" id="59920"/>
    <lineage>
        <taxon>Bacteria</taxon>
        <taxon>Bacillati</taxon>
        <taxon>Cyanobacteriota</taxon>
        <taxon>Cyanophyceae</taxon>
        <taxon>Synechococcales</taxon>
        <taxon>Prochlorococcaceae</taxon>
        <taxon>Prochlorococcus</taxon>
    </lineage>
</organism>
<accession>Q46IW2</accession>
<evidence type="ECO:0000255" key="1">
    <source>
        <dbReference type="HAMAP-Rule" id="MF_00480"/>
    </source>
</evidence>
<evidence type="ECO:0000305" key="2"/>
<comment type="function">
    <text evidence="1">One of the primary rRNA binding proteins, it binds directly to 16S rRNA where it nucleates assembly of the head domain of the 30S subunit. Is located at the subunit interface close to the decoding center, probably blocks exit of the E-site tRNA.</text>
</comment>
<comment type="subunit">
    <text evidence="1">Part of the 30S ribosomal subunit. Contacts proteins S9 and S11.</text>
</comment>
<comment type="similarity">
    <text evidence="1">Belongs to the universal ribosomal protein uS7 family.</text>
</comment>